<keyword id="KW-1003">Cell membrane</keyword>
<keyword id="KW-0342">GTP-binding</keyword>
<keyword id="KW-0378">Hydrolase</keyword>
<keyword id="KW-0472">Membrane</keyword>
<keyword id="KW-0547">Nucleotide-binding</keyword>
<keyword id="KW-0648">Protein biosynthesis</keyword>
<reference key="1">
    <citation type="submission" date="2008-02" db="EMBL/GenBank/DDBJ databases">
        <title>Genome sequence of Ureaplasma parvum serovar 3.</title>
        <authorList>
            <person name="Methe B.A."/>
            <person name="Glass J."/>
            <person name="Waites K."/>
            <person name="Shrivastava S."/>
        </authorList>
    </citation>
    <scope>NUCLEOTIDE SEQUENCE [LARGE SCALE GENOMIC DNA]</scope>
    <source>
        <strain>ATCC 27815 / 27 / NCTC 11736</strain>
    </source>
</reference>
<name>LEPA_UREP2</name>
<accession>B1AIW2</accession>
<proteinExistence type="inferred from homology"/>
<gene>
    <name evidence="1" type="primary">lepA</name>
    <name type="ordered locus">UPA3_0339</name>
</gene>
<evidence type="ECO:0000255" key="1">
    <source>
        <dbReference type="HAMAP-Rule" id="MF_00071"/>
    </source>
</evidence>
<organism>
    <name type="scientific">Ureaplasma parvum serovar 3 (strain ATCC 27815 / 27 / NCTC 11736)</name>
    <dbReference type="NCBI Taxonomy" id="505682"/>
    <lineage>
        <taxon>Bacteria</taxon>
        <taxon>Bacillati</taxon>
        <taxon>Mycoplasmatota</taxon>
        <taxon>Mycoplasmoidales</taxon>
        <taxon>Mycoplasmoidaceae</taxon>
        <taxon>Ureaplasma</taxon>
    </lineage>
</organism>
<feature type="chain" id="PRO_1000075155" description="Elongation factor 4">
    <location>
        <begin position="1"/>
        <end position="599"/>
    </location>
</feature>
<feature type="domain" description="tr-type G">
    <location>
        <begin position="4"/>
        <end position="186"/>
    </location>
</feature>
<feature type="binding site" evidence="1">
    <location>
        <begin position="16"/>
        <end position="21"/>
    </location>
    <ligand>
        <name>GTP</name>
        <dbReference type="ChEBI" id="CHEBI:37565"/>
    </ligand>
</feature>
<feature type="binding site" evidence="1">
    <location>
        <begin position="133"/>
        <end position="136"/>
    </location>
    <ligand>
        <name>GTP</name>
        <dbReference type="ChEBI" id="CHEBI:37565"/>
    </ligand>
</feature>
<comment type="function">
    <text evidence="1">Required for accurate and efficient protein synthesis under certain stress conditions. May act as a fidelity factor of the translation reaction, by catalyzing a one-codon backward translocation of tRNAs on improperly translocated ribosomes. Back-translocation proceeds from a post-translocation (POST) complex to a pre-translocation (PRE) complex, thus giving elongation factor G a second chance to translocate the tRNAs correctly. Binds to ribosomes in a GTP-dependent manner.</text>
</comment>
<comment type="catalytic activity">
    <reaction evidence="1">
        <text>GTP + H2O = GDP + phosphate + H(+)</text>
        <dbReference type="Rhea" id="RHEA:19669"/>
        <dbReference type="ChEBI" id="CHEBI:15377"/>
        <dbReference type="ChEBI" id="CHEBI:15378"/>
        <dbReference type="ChEBI" id="CHEBI:37565"/>
        <dbReference type="ChEBI" id="CHEBI:43474"/>
        <dbReference type="ChEBI" id="CHEBI:58189"/>
        <dbReference type="EC" id="3.6.5.n1"/>
    </reaction>
</comment>
<comment type="subcellular location">
    <subcellularLocation>
        <location evidence="1">Cell membrane</location>
        <topology evidence="1">Peripheral membrane protein</topology>
        <orientation evidence="1">Cytoplasmic side</orientation>
    </subcellularLocation>
</comment>
<comment type="similarity">
    <text evidence="1">Belongs to the TRAFAC class translation factor GTPase superfamily. Classic translation factor GTPase family. LepA subfamily.</text>
</comment>
<protein>
    <recommendedName>
        <fullName evidence="1">Elongation factor 4</fullName>
        <shortName evidence="1">EF-4</shortName>
        <ecNumber evidence="1">3.6.5.n1</ecNumber>
    </recommendedName>
    <alternativeName>
        <fullName evidence="1">Ribosomal back-translocase LepA</fullName>
    </alternativeName>
</protein>
<dbReference type="EC" id="3.6.5.n1" evidence="1"/>
<dbReference type="EMBL" id="CP000942">
    <property type="protein sequence ID" value="ACA33248.1"/>
    <property type="molecule type" value="Genomic_DNA"/>
</dbReference>
<dbReference type="RefSeq" id="WP_006688644.1">
    <property type="nucleotide sequence ID" value="NC_010503.1"/>
</dbReference>
<dbReference type="SMR" id="B1AIW2"/>
<dbReference type="GeneID" id="29672470"/>
<dbReference type="KEGG" id="upa:UPA3_0339"/>
<dbReference type="HOGENOM" id="CLU_009995_3_3_14"/>
<dbReference type="Proteomes" id="UP000002162">
    <property type="component" value="Chromosome"/>
</dbReference>
<dbReference type="GO" id="GO:0005886">
    <property type="term" value="C:plasma membrane"/>
    <property type="evidence" value="ECO:0007669"/>
    <property type="project" value="UniProtKB-SubCell"/>
</dbReference>
<dbReference type="GO" id="GO:0005525">
    <property type="term" value="F:GTP binding"/>
    <property type="evidence" value="ECO:0007669"/>
    <property type="project" value="UniProtKB-UniRule"/>
</dbReference>
<dbReference type="GO" id="GO:0003924">
    <property type="term" value="F:GTPase activity"/>
    <property type="evidence" value="ECO:0007669"/>
    <property type="project" value="UniProtKB-UniRule"/>
</dbReference>
<dbReference type="GO" id="GO:0043022">
    <property type="term" value="F:ribosome binding"/>
    <property type="evidence" value="ECO:0007669"/>
    <property type="project" value="UniProtKB-UniRule"/>
</dbReference>
<dbReference type="GO" id="GO:0003746">
    <property type="term" value="F:translation elongation factor activity"/>
    <property type="evidence" value="ECO:0007669"/>
    <property type="project" value="UniProtKB-UniRule"/>
</dbReference>
<dbReference type="GO" id="GO:0045727">
    <property type="term" value="P:positive regulation of translation"/>
    <property type="evidence" value="ECO:0007669"/>
    <property type="project" value="UniProtKB-UniRule"/>
</dbReference>
<dbReference type="CDD" id="cd03699">
    <property type="entry name" value="EF4_II"/>
    <property type="match status" value="1"/>
</dbReference>
<dbReference type="CDD" id="cd16260">
    <property type="entry name" value="EF4_III"/>
    <property type="match status" value="1"/>
</dbReference>
<dbReference type="CDD" id="cd01890">
    <property type="entry name" value="LepA"/>
    <property type="match status" value="1"/>
</dbReference>
<dbReference type="CDD" id="cd03709">
    <property type="entry name" value="lepA_C"/>
    <property type="match status" value="1"/>
</dbReference>
<dbReference type="FunFam" id="3.40.50.300:FF:000078">
    <property type="entry name" value="Elongation factor 4"/>
    <property type="match status" value="1"/>
</dbReference>
<dbReference type="FunFam" id="2.40.30.10:FF:000015">
    <property type="entry name" value="Translation factor GUF1, mitochondrial"/>
    <property type="match status" value="1"/>
</dbReference>
<dbReference type="FunFam" id="3.30.70.240:FF:000007">
    <property type="entry name" value="Translation factor GUF1, mitochondrial"/>
    <property type="match status" value="1"/>
</dbReference>
<dbReference type="FunFam" id="3.30.70.2570:FF:000001">
    <property type="entry name" value="Translation factor GUF1, mitochondrial"/>
    <property type="match status" value="1"/>
</dbReference>
<dbReference type="FunFam" id="3.30.70.870:FF:000004">
    <property type="entry name" value="Translation factor GUF1, mitochondrial"/>
    <property type="match status" value="1"/>
</dbReference>
<dbReference type="Gene3D" id="3.30.70.240">
    <property type="match status" value="1"/>
</dbReference>
<dbReference type="Gene3D" id="3.30.70.2570">
    <property type="entry name" value="Elongation factor 4, C-terminal domain"/>
    <property type="match status" value="1"/>
</dbReference>
<dbReference type="Gene3D" id="3.30.70.870">
    <property type="entry name" value="Elongation Factor G (Translational Gtpase), domain 3"/>
    <property type="match status" value="1"/>
</dbReference>
<dbReference type="Gene3D" id="3.40.50.300">
    <property type="entry name" value="P-loop containing nucleotide triphosphate hydrolases"/>
    <property type="match status" value="1"/>
</dbReference>
<dbReference type="Gene3D" id="2.40.30.10">
    <property type="entry name" value="Translation factors"/>
    <property type="match status" value="1"/>
</dbReference>
<dbReference type="HAMAP" id="MF_00071">
    <property type="entry name" value="LepA"/>
    <property type="match status" value="1"/>
</dbReference>
<dbReference type="InterPro" id="IPR006297">
    <property type="entry name" value="EF-4"/>
</dbReference>
<dbReference type="InterPro" id="IPR035647">
    <property type="entry name" value="EFG_III/V"/>
</dbReference>
<dbReference type="InterPro" id="IPR000640">
    <property type="entry name" value="EFG_V-like"/>
</dbReference>
<dbReference type="InterPro" id="IPR004161">
    <property type="entry name" value="EFTu-like_2"/>
</dbReference>
<dbReference type="InterPro" id="IPR031157">
    <property type="entry name" value="G_TR_CS"/>
</dbReference>
<dbReference type="InterPro" id="IPR038363">
    <property type="entry name" value="LepA_C_sf"/>
</dbReference>
<dbReference type="InterPro" id="IPR013842">
    <property type="entry name" value="LepA_CTD"/>
</dbReference>
<dbReference type="InterPro" id="IPR035654">
    <property type="entry name" value="LepA_IV"/>
</dbReference>
<dbReference type="InterPro" id="IPR027417">
    <property type="entry name" value="P-loop_NTPase"/>
</dbReference>
<dbReference type="InterPro" id="IPR005225">
    <property type="entry name" value="Small_GTP-bd"/>
</dbReference>
<dbReference type="InterPro" id="IPR000795">
    <property type="entry name" value="T_Tr_GTP-bd_dom"/>
</dbReference>
<dbReference type="InterPro" id="IPR009000">
    <property type="entry name" value="Transl_B-barrel_sf"/>
</dbReference>
<dbReference type="NCBIfam" id="TIGR01393">
    <property type="entry name" value="lepA"/>
    <property type="match status" value="1"/>
</dbReference>
<dbReference type="NCBIfam" id="TIGR00231">
    <property type="entry name" value="small_GTP"/>
    <property type="match status" value="1"/>
</dbReference>
<dbReference type="PANTHER" id="PTHR43512:SF4">
    <property type="entry name" value="TRANSLATION FACTOR GUF1 HOMOLOG, CHLOROPLASTIC"/>
    <property type="match status" value="1"/>
</dbReference>
<dbReference type="PANTHER" id="PTHR43512">
    <property type="entry name" value="TRANSLATION FACTOR GUF1-RELATED"/>
    <property type="match status" value="1"/>
</dbReference>
<dbReference type="Pfam" id="PF00679">
    <property type="entry name" value="EFG_C"/>
    <property type="match status" value="1"/>
</dbReference>
<dbReference type="Pfam" id="PF00009">
    <property type="entry name" value="GTP_EFTU"/>
    <property type="match status" value="1"/>
</dbReference>
<dbReference type="Pfam" id="PF03144">
    <property type="entry name" value="GTP_EFTU_D2"/>
    <property type="match status" value="1"/>
</dbReference>
<dbReference type="Pfam" id="PF06421">
    <property type="entry name" value="LepA_C"/>
    <property type="match status" value="1"/>
</dbReference>
<dbReference type="PRINTS" id="PR00315">
    <property type="entry name" value="ELONGATNFCT"/>
</dbReference>
<dbReference type="SMART" id="SM00838">
    <property type="entry name" value="EFG_C"/>
    <property type="match status" value="1"/>
</dbReference>
<dbReference type="SUPFAM" id="SSF54980">
    <property type="entry name" value="EF-G C-terminal domain-like"/>
    <property type="match status" value="2"/>
</dbReference>
<dbReference type="SUPFAM" id="SSF52540">
    <property type="entry name" value="P-loop containing nucleoside triphosphate hydrolases"/>
    <property type="match status" value="1"/>
</dbReference>
<dbReference type="SUPFAM" id="SSF50447">
    <property type="entry name" value="Translation proteins"/>
    <property type="match status" value="1"/>
</dbReference>
<dbReference type="PROSITE" id="PS00301">
    <property type="entry name" value="G_TR_1"/>
    <property type="match status" value="1"/>
</dbReference>
<dbReference type="PROSITE" id="PS51722">
    <property type="entry name" value="G_TR_2"/>
    <property type="match status" value="1"/>
</dbReference>
<sequence length="599" mass="67044">MDKKFIRNFSIIAHIDHGKSTLSDRIIEFTNTLSKREMTNQILDSMDIERERGITIKLNAVQIKYHAKDKHEYLIHLIDTPGHVDFTYEVSRSLAACEGAILVVDAAQGIEAQTLSNVYLALENNLEIVPTINKIDLPSADPNRVKKEIEDVIGLDTADVPLISAKTGLNIQDVLEAIIKHVPPPLDAKDDAKLQALIFDSFYDSYKGVVCLVRVKQGTIKVGDKIRMMANNKDYIVSELGIRTPKIVNKTELVAGEVGWVAAAIKTVKDINVGDTITHTNNPADKPLPGYKKILPMVYCGLYPIDTSQYDDLKEAMAKISLSDAALTYEYETSQALGFGIRCGFLGLLHMDVIRERIAREFNIELILTAPSVIYKIELTNNQEISIDSPAKMPEPTSIKLIKEPFVKLAIITPDNYVGAIMELCQSRRGIYDDLEVIDGTRRKLIYKMPLAEIMYSFFDSLKSITKGYATMDYELIGYQAEKLVKIDIMLNGNKVDALSIIAHRDFAYGKSKIICERLKEVIPKHQFEIPIQASIGSKIIARETIKAVRKDVIAKCYGGDVSRKKKLLEQQKEGKKRLKAIGNVDVPQDAFVKVLSEN</sequence>